<feature type="chain" id="PRO_1000095787" description="Tryptophan synthase beta chain">
    <location>
        <begin position="1"/>
        <end position="397"/>
    </location>
</feature>
<feature type="modified residue" description="N6-(pyridoxal phosphate)lysine" evidence="1">
    <location>
        <position position="87"/>
    </location>
</feature>
<protein>
    <recommendedName>
        <fullName evidence="1">Tryptophan synthase beta chain</fullName>
        <ecNumber evidence="1">4.2.1.20</ecNumber>
    </recommendedName>
</protein>
<accession>B6I9X5</accession>
<sequence>MTTLLNPYFGEFGGMYVPQILMPALRQLEEAFVSAQKDPEFQAQFNDLLKNYAGRPTALTKCQNITAGTNTTLYLKREDLLHGGAHKTNQVLGQALLAKRMGKTEIIAETGAGQHGVASALASALLGLKCRIYMGAKDVERQSPNVFRMRLMGAEVIPVHSGSATLKDACNEALRDWSGSYETAHYMLGTAAGPHPYPTIVREFQRMIGEETKAQILEREGRLPDAVIACVGGGSNAIGMFADFINETNVGLIGVEPGGHGIETGEHGAPLKHGRVGIYFGMKAPMMQTEDGQIEESYSISAGLDFPSVGPQHAYLNSTGRADYVSITDDEALEAFKTLCLHEGIIPALESSHALAHALKMMRENPDKEQLLVVNLSGRGDKDIFTVHDILKARGEI</sequence>
<keyword id="KW-0028">Amino-acid biosynthesis</keyword>
<keyword id="KW-0057">Aromatic amino acid biosynthesis</keyword>
<keyword id="KW-0456">Lyase</keyword>
<keyword id="KW-0663">Pyridoxal phosphate</keyword>
<keyword id="KW-0822">Tryptophan biosynthesis</keyword>
<organism>
    <name type="scientific">Escherichia coli (strain SE11)</name>
    <dbReference type="NCBI Taxonomy" id="409438"/>
    <lineage>
        <taxon>Bacteria</taxon>
        <taxon>Pseudomonadati</taxon>
        <taxon>Pseudomonadota</taxon>
        <taxon>Gammaproteobacteria</taxon>
        <taxon>Enterobacterales</taxon>
        <taxon>Enterobacteriaceae</taxon>
        <taxon>Escherichia</taxon>
    </lineage>
</organism>
<proteinExistence type="inferred from homology"/>
<evidence type="ECO:0000255" key="1">
    <source>
        <dbReference type="HAMAP-Rule" id="MF_00133"/>
    </source>
</evidence>
<dbReference type="EC" id="4.2.1.20" evidence="1"/>
<dbReference type="EMBL" id="AP009240">
    <property type="protein sequence ID" value="BAG76834.1"/>
    <property type="molecule type" value="Genomic_DNA"/>
</dbReference>
<dbReference type="RefSeq" id="WP_000209520.1">
    <property type="nucleotide sequence ID" value="NC_011415.1"/>
</dbReference>
<dbReference type="SMR" id="B6I9X5"/>
<dbReference type="GeneID" id="75203373"/>
<dbReference type="KEGG" id="ecy:ECSE_1310"/>
<dbReference type="HOGENOM" id="CLU_016734_3_1_6"/>
<dbReference type="UniPathway" id="UPA00035">
    <property type="reaction ID" value="UER00044"/>
</dbReference>
<dbReference type="Proteomes" id="UP000008199">
    <property type="component" value="Chromosome"/>
</dbReference>
<dbReference type="GO" id="GO:0005737">
    <property type="term" value="C:cytoplasm"/>
    <property type="evidence" value="ECO:0007669"/>
    <property type="project" value="TreeGrafter"/>
</dbReference>
<dbReference type="GO" id="GO:0004834">
    <property type="term" value="F:tryptophan synthase activity"/>
    <property type="evidence" value="ECO:0007669"/>
    <property type="project" value="UniProtKB-UniRule"/>
</dbReference>
<dbReference type="CDD" id="cd06446">
    <property type="entry name" value="Trp-synth_B"/>
    <property type="match status" value="1"/>
</dbReference>
<dbReference type="FunFam" id="3.40.50.1100:FF:000001">
    <property type="entry name" value="Tryptophan synthase beta chain"/>
    <property type="match status" value="1"/>
</dbReference>
<dbReference type="FunFam" id="3.40.50.1100:FF:000004">
    <property type="entry name" value="Tryptophan synthase beta chain"/>
    <property type="match status" value="1"/>
</dbReference>
<dbReference type="Gene3D" id="3.40.50.1100">
    <property type="match status" value="2"/>
</dbReference>
<dbReference type="HAMAP" id="MF_00133">
    <property type="entry name" value="Trp_synth_beta"/>
    <property type="match status" value="1"/>
</dbReference>
<dbReference type="InterPro" id="IPR006653">
    <property type="entry name" value="Trp_synth_b_CS"/>
</dbReference>
<dbReference type="InterPro" id="IPR006654">
    <property type="entry name" value="Trp_synth_beta"/>
</dbReference>
<dbReference type="InterPro" id="IPR023026">
    <property type="entry name" value="Trp_synth_beta/beta-like"/>
</dbReference>
<dbReference type="InterPro" id="IPR001926">
    <property type="entry name" value="TrpB-like_PALP"/>
</dbReference>
<dbReference type="InterPro" id="IPR036052">
    <property type="entry name" value="TrpB-like_PALP_sf"/>
</dbReference>
<dbReference type="NCBIfam" id="TIGR00263">
    <property type="entry name" value="trpB"/>
    <property type="match status" value="1"/>
</dbReference>
<dbReference type="PANTHER" id="PTHR48077:SF3">
    <property type="entry name" value="TRYPTOPHAN SYNTHASE"/>
    <property type="match status" value="1"/>
</dbReference>
<dbReference type="PANTHER" id="PTHR48077">
    <property type="entry name" value="TRYPTOPHAN SYNTHASE-RELATED"/>
    <property type="match status" value="1"/>
</dbReference>
<dbReference type="Pfam" id="PF00291">
    <property type="entry name" value="PALP"/>
    <property type="match status" value="1"/>
</dbReference>
<dbReference type="PIRSF" id="PIRSF001413">
    <property type="entry name" value="Trp_syn_beta"/>
    <property type="match status" value="1"/>
</dbReference>
<dbReference type="SUPFAM" id="SSF53686">
    <property type="entry name" value="Tryptophan synthase beta subunit-like PLP-dependent enzymes"/>
    <property type="match status" value="1"/>
</dbReference>
<dbReference type="PROSITE" id="PS00168">
    <property type="entry name" value="TRP_SYNTHASE_BETA"/>
    <property type="match status" value="1"/>
</dbReference>
<name>TRPB_ECOSE</name>
<reference key="1">
    <citation type="journal article" date="2008" name="DNA Res.">
        <title>Complete genome sequence and comparative analysis of the wild-type commensal Escherichia coli strain SE11 isolated from a healthy adult.</title>
        <authorList>
            <person name="Oshima K."/>
            <person name="Toh H."/>
            <person name="Ogura Y."/>
            <person name="Sasamoto H."/>
            <person name="Morita H."/>
            <person name="Park S.-H."/>
            <person name="Ooka T."/>
            <person name="Iyoda S."/>
            <person name="Taylor T.D."/>
            <person name="Hayashi T."/>
            <person name="Itoh K."/>
            <person name="Hattori M."/>
        </authorList>
    </citation>
    <scope>NUCLEOTIDE SEQUENCE [LARGE SCALE GENOMIC DNA]</scope>
    <source>
        <strain>SE11</strain>
    </source>
</reference>
<gene>
    <name evidence="1" type="primary">trpB</name>
    <name type="ordered locus">ECSE_1310</name>
</gene>
<comment type="function">
    <text evidence="1">The beta subunit is responsible for the synthesis of L-tryptophan from indole and L-serine.</text>
</comment>
<comment type="catalytic activity">
    <reaction evidence="1">
        <text>(1S,2R)-1-C-(indol-3-yl)glycerol 3-phosphate + L-serine = D-glyceraldehyde 3-phosphate + L-tryptophan + H2O</text>
        <dbReference type="Rhea" id="RHEA:10532"/>
        <dbReference type="ChEBI" id="CHEBI:15377"/>
        <dbReference type="ChEBI" id="CHEBI:33384"/>
        <dbReference type="ChEBI" id="CHEBI:57912"/>
        <dbReference type="ChEBI" id="CHEBI:58866"/>
        <dbReference type="ChEBI" id="CHEBI:59776"/>
        <dbReference type="EC" id="4.2.1.20"/>
    </reaction>
</comment>
<comment type="cofactor">
    <cofactor evidence="1">
        <name>pyridoxal 5'-phosphate</name>
        <dbReference type="ChEBI" id="CHEBI:597326"/>
    </cofactor>
</comment>
<comment type="pathway">
    <text evidence="1">Amino-acid biosynthesis; L-tryptophan biosynthesis; L-tryptophan from chorismate: step 5/5.</text>
</comment>
<comment type="subunit">
    <text evidence="1">Tetramer of two alpha and two beta chains.</text>
</comment>
<comment type="similarity">
    <text evidence="1">Belongs to the TrpB family.</text>
</comment>